<organism>
    <name type="scientific">Methylobacterium nodulans (strain LMG 21967 / CNCM I-2342 / ORS 2060)</name>
    <dbReference type="NCBI Taxonomy" id="460265"/>
    <lineage>
        <taxon>Bacteria</taxon>
        <taxon>Pseudomonadati</taxon>
        <taxon>Pseudomonadota</taxon>
        <taxon>Alphaproteobacteria</taxon>
        <taxon>Hyphomicrobiales</taxon>
        <taxon>Methylobacteriaceae</taxon>
        <taxon>Methylobacterium</taxon>
    </lineage>
</organism>
<sequence>MRFPSPLTEGRLVRRYKRFLADVELADGRVVTAHCANPGTMLGLIAPGRPVLLSASTNPARKLAWSWEMVQADLPGGPQWVGINTLRPNLLVAEAFREGRLPPLSGAATLRPEVRYGRASRVDFLAEGPAGPCHVEVKNCHMMREAGLAEFPDCVAARSARHMDELADVVRGGGRALLIVVVQMRAARFDVAGDIDPGFAAAFRRARAAGVETVAYACRLDPDEVTIDREIPIVTA</sequence>
<gene>
    <name evidence="1" type="primary">sfsA</name>
    <name type="ordered locus">Mnod_7664</name>
</gene>
<feature type="chain" id="PRO_1000196976" description="Sugar fermentation stimulation protein homolog">
    <location>
        <begin position="1"/>
        <end position="236"/>
    </location>
</feature>
<keyword id="KW-1185">Reference proteome</keyword>
<protein>
    <recommendedName>
        <fullName evidence="1">Sugar fermentation stimulation protein homolog</fullName>
    </recommendedName>
</protein>
<comment type="similarity">
    <text evidence="1">Belongs to the SfsA family.</text>
</comment>
<proteinExistence type="inferred from homology"/>
<accession>B8IQU9</accession>
<dbReference type="EMBL" id="CP001349">
    <property type="protein sequence ID" value="ACL62394.1"/>
    <property type="molecule type" value="Genomic_DNA"/>
</dbReference>
<dbReference type="RefSeq" id="WP_015933946.1">
    <property type="nucleotide sequence ID" value="NC_011894.1"/>
</dbReference>
<dbReference type="SMR" id="B8IQU9"/>
<dbReference type="STRING" id="460265.Mnod_7664"/>
<dbReference type="KEGG" id="mno:Mnod_7664"/>
<dbReference type="eggNOG" id="COG1489">
    <property type="taxonomic scope" value="Bacteria"/>
</dbReference>
<dbReference type="HOGENOM" id="CLU_052299_2_0_5"/>
<dbReference type="OrthoDB" id="9802365at2"/>
<dbReference type="Proteomes" id="UP000008207">
    <property type="component" value="Chromosome"/>
</dbReference>
<dbReference type="GO" id="GO:0003677">
    <property type="term" value="F:DNA binding"/>
    <property type="evidence" value="ECO:0007669"/>
    <property type="project" value="InterPro"/>
</dbReference>
<dbReference type="CDD" id="cd22359">
    <property type="entry name" value="SfsA-like_bacterial"/>
    <property type="match status" value="1"/>
</dbReference>
<dbReference type="Gene3D" id="2.40.50.580">
    <property type="match status" value="1"/>
</dbReference>
<dbReference type="Gene3D" id="3.40.1350.60">
    <property type="match status" value="1"/>
</dbReference>
<dbReference type="HAMAP" id="MF_00095">
    <property type="entry name" value="SfsA"/>
    <property type="match status" value="1"/>
</dbReference>
<dbReference type="InterPro" id="IPR005224">
    <property type="entry name" value="SfsA"/>
</dbReference>
<dbReference type="InterPro" id="IPR040452">
    <property type="entry name" value="SfsA_C"/>
</dbReference>
<dbReference type="InterPro" id="IPR041465">
    <property type="entry name" value="SfsA_N"/>
</dbReference>
<dbReference type="NCBIfam" id="TIGR00230">
    <property type="entry name" value="sfsA"/>
    <property type="match status" value="1"/>
</dbReference>
<dbReference type="PANTHER" id="PTHR30545">
    <property type="entry name" value="SUGAR FERMENTATION STIMULATION PROTEIN A"/>
    <property type="match status" value="1"/>
</dbReference>
<dbReference type="PANTHER" id="PTHR30545:SF2">
    <property type="entry name" value="SUGAR FERMENTATION STIMULATION PROTEIN A"/>
    <property type="match status" value="1"/>
</dbReference>
<dbReference type="Pfam" id="PF03749">
    <property type="entry name" value="SfsA"/>
    <property type="match status" value="1"/>
</dbReference>
<dbReference type="Pfam" id="PF17746">
    <property type="entry name" value="SfsA_N"/>
    <property type="match status" value="1"/>
</dbReference>
<name>SFSA_METNO</name>
<evidence type="ECO:0000255" key="1">
    <source>
        <dbReference type="HAMAP-Rule" id="MF_00095"/>
    </source>
</evidence>
<reference key="1">
    <citation type="submission" date="2009-01" db="EMBL/GenBank/DDBJ databases">
        <title>Complete sequence of chromosome of Methylobacterium nodulans ORS 2060.</title>
        <authorList>
            <consortium name="US DOE Joint Genome Institute"/>
            <person name="Lucas S."/>
            <person name="Copeland A."/>
            <person name="Lapidus A."/>
            <person name="Glavina del Rio T."/>
            <person name="Dalin E."/>
            <person name="Tice H."/>
            <person name="Bruce D."/>
            <person name="Goodwin L."/>
            <person name="Pitluck S."/>
            <person name="Sims D."/>
            <person name="Brettin T."/>
            <person name="Detter J.C."/>
            <person name="Han C."/>
            <person name="Larimer F."/>
            <person name="Land M."/>
            <person name="Hauser L."/>
            <person name="Kyrpides N."/>
            <person name="Ivanova N."/>
            <person name="Marx C.J."/>
            <person name="Richardson P."/>
        </authorList>
    </citation>
    <scope>NUCLEOTIDE SEQUENCE [LARGE SCALE GENOMIC DNA]</scope>
    <source>
        <strain>LMG 21967 / CNCM I-2342 / ORS 2060</strain>
    </source>
</reference>